<name>CRGA_MYCSJ</name>
<proteinExistence type="inferred from homology"/>
<feature type="chain" id="PRO_1000051704" description="Cell division protein CrgA">
    <location>
        <begin position="1"/>
        <end position="94"/>
    </location>
</feature>
<feature type="transmembrane region" description="Helical" evidence="1">
    <location>
        <begin position="31"/>
        <end position="51"/>
    </location>
</feature>
<feature type="transmembrane region" description="Helical" evidence="1">
    <location>
        <begin position="71"/>
        <end position="91"/>
    </location>
</feature>
<gene>
    <name evidence="1" type="primary">crgA</name>
    <name type="ordered locus">Mjls_0012</name>
</gene>
<dbReference type="EMBL" id="CP000580">
    <property type="protein sequence ID" value="ABN95825.1"/>
    <property type="molecule type" value="Genomic_DNA"/>
</dbReference>
<dbReference type="SMR" id="A3PSE8"/>
<dbReference type="KEGG" id="mjl:Mjls_0012"/>
<dbReference type="HOGENOM" id="CLU_149126_2_0_11"/>
<dbReference type="BioCyc" id="MSP164757:G1G8C-15-MONOMER"/>
<dbReference type="GO" id="GO:0005886">
    <property type="term" value="C:plasma membrane"/>
    <property type="evidence" value="ECO:0007669"/>
    <property type="project" value="UniProtKB-SubCell"/>
</dbReference>
<dbReference type="GO" id="GO:0051301">
    <property type="term" value="P:cell division"/>
    <property type="evidence" value="ECO:0007669"/>
    <property type="project" value="UniProtKB-UniRule"/>
</dbReference>
<dbReference type="HAMAP" id="MF_00631">
    <property type="entry name" value="CrgA"/>
    <property type="match status" value="1"/>
</dbReference>
<dbReference type="InterPro" id="IPR009619">
    <property type="entry name" value="CrgA"/>
</dbReference>
<dbReference type="NCBIfam" id="NF001194">
    <property type="entry name" value="PRK00159.1"/>
    <property type="match status" value="1"/>
</dbReference>
<dbReference type="Pfam" id="PF06781">
    <property type="entry name" value="CrgA"/>
    <property type="match status" value="1"/>
</dbReference>
<accession>A3PSE8</accession>
<organism>
    <name type="scientific">Mycobacterium sp. (strain JLS)</name>
    <dbReference type="NCBI Taxonomy" id="164757"/>
    <lineage>
        <taxon>Bacteria</taxon>
        <taxon>Bacillati</taxon>
        <taxon>Actinomycetota</taxon>
        <taxon>Actinomycetes</taxon>
        <taxon>Mycobacteriales</taxon>
        <taxon>Mycobacteriaceae</taxon>
        <taxon>Mycobacterium</taxon>
    </lineage>
</organism>
<evidence type="ECO:0000255" key="1">
    <source>
        <dbReference type="HAMAP-Rule" id="MF_00631"/>
    </source>
</evidence>
<keyword id="KW-0131">Cell cycle</keyword>
<keyword id="KW-0132">Cell division</keyword>
<keyword id="KW-1003">Cell membrane</keyword>
<keyword id="KW-0472">Membrane</keyword>
<keyword id="KW-0812">Transmembrane</keyword>
<keyword id="KW-1133">Transmembrane helix</keyword>
<comment type="function">
    <text evidence="1">Involved in cell division.</text>
</comment>
<comment type="subcellular location">
    <subcellularLocation>
        <location evidence="1">Cell membrane</location>
        <topology evidence="1">Multi-pass membrane protein</topology>
    </subcellularLocation>
</comment>
<comment type="similarity">
    <text evidence="1">Belongs to the CrgA family.</text>
</comment>
<protein>
    <recommendedName>
        <fullName evidence="1">Cell division protein CrgA</fullName>
    </recommendedName>
</protein>
<reference key="1">
    <citation type="submission" date="2007-02" db="EMBL/GenBank/DDBJ databases">
        <title>Complete sequence of Mycobacterium sp. JLS.</title>
        <authorList>
            <consortium name="US DOE Joint Genome Institute"/>
            <person name="Copeland A."/>
            <person name="Lucas S."/>
            <person name="Lapidus A."/>
            <person name="Barry K."/>
            <person name="Detter J.C."/>
            <person name="Glavina del Rio T."/>
            <person name="Hammon N."/>
            <person name="Israni S."/>
            <person name="Dalin E."/>
            <person name="Tice H."/>
            <person name="Pitluck S."/>
            <person name="Chain P."/>
            <person name="Malfatti S."/>
            <person name="Shin M."/>
            <person name="Vergez L."/>
            <person name="Schmutz J."/>
            <person name="Larimer F."/>
            <person name="Land M."/>
            <person name="Hauser L."/>
            <person name="Kyrpides N."/>
            <person name="Mikhailova N."/>
            <person name="Miller C.D."/>
            <person name="Anderson A.J."/>
            <person name="Sims R.C."/>
            <person name="Richardson P."/>
        </authorList>
    </citation>
    <scope>NUCLEOTIDE SEQUENCE [LARGE SCALE GENOMIC DNA]</scope>
    <source>
        <strain>JLS</strain>
    </source>
</reference>
<sequence length="94" mass="10539">MPKSKVRKKNDFTISPVSRTPVKVKAGPSSVWFVALFVGLMLIGLIWLLVFQLAATNPVDAPGMLQWMADLGPWNYAIAFAFMITGLLLTMRWR</sequence>